<protein>
    <recommendedName>
        <fullName evidence="1">Large ribosomal subunit protein bL19</fullName>
    </recommendedName>
    <alternativeName>
        <fullName evidence="2">50S ribosomal protein L19</fullName>
    </alternativeName>
</protein>
<evidence type="ECO:0000255" key="1">
    <source>
        <dbReference type="HAMAP-Rule" id="MF_00402"/>
    </source>
</evidence>
<evidence type="ECO:0000305" key="2"/>
<feature type="chain" id="PRO_1000049689" description="Large ribosomal subunit protein bL19">
    <location>
        <begin position="1"/>
        <end position="115"/>
    </location>
</feature>
<organism>
    <name type="scientific">Klebsiella pneumoniae subsp. pneumoniae (strain ATCC 700721 / MGH 78578)</name>
    <dbReference type="NCBI Taxonomy" id="272620"/>
    <lineage>
        <taxon>Bacteria</taxon>
        <taxon>Pseudomonadati</taxon>
        <taxon>Pseudomonadota</taxon>
        <taxon>Gammaproteobacteria</taxon>
        <taxon>Enterobacterales</taxon>
        <taxon>Enterobacteriaceae</taxon>
        <taxon>Klebsiella/Raoultella group</taxon>
        <taxon>Klebsiella</taxon>
        <taxon>Klebsiella pneumoniae complex</taxon>
    </lineage>
</organism>
<dbReference type="EMBL" id="CP000647">
    <property type="protein sequence ID" value="ABR78335.1"/>
    <property type="molecule type" value="Genomic_DNA"/>
</dbReference>
<dbReference type="RefSeq" id="WP_002914145.1">
    <property type="nucleotide sequence ID" value="NC_009648.1"/>
</dbReference>
<dbReference type="SMR" id="A6TCL4"/>
<dbReference type="STRING" id="272620.KPN_02929"/>
<dbReference type="jPOST" id="A6TCL4"/>
<dbReference type="PaxDb" id="272620-KPN_02929"/>
<dbReference type="EnsemblBacteria" id="ABR78335">
    <property type="protein sequence ID" value="ABR78335"/>
    <property type="gene ID" value="KPN_02929"/>
</dbReference>
<dbReference type="GeneID" id="97446661"/>
<dbReference type="KEGG" id="kpn:KPN_02929"/>
<dbReference type="HOGENOM" id="CLU_103507_2_1_6"/>
<dbReference type="Proteomes" id="UP000000265">
    <property type="component" value="Chromosome"/>
</dbReference>
<dbReference type="GO" id="GO:0022625">
    <property type="term" value="C:cytosolic large ribosomal subunit"/>
    <property type="evidence" value="ECO:0007669"/>
    <property type="project" value="TreeGrafter"/>
</dbReference>
<dbReference type="GO" id="GO:0003735">
    <property type="term" value="F:structural constituent of ribosome"/>
    <property type="evidence" value="ECO:0007669"/>
    <property type="project" value="InterPro"/>
</dbReference>
<dbReference type="GO" id="GO:0006412">
    <property type="term" value="P:translation"/>
    <property type="evidence" value="ECO:0007669"/>
    <property type="project" value="UniProtKB-UniRule"/>
</dbReference>
<dbReference type="FunFam" id="2.30.30.790:FF:000001">
    <property type="entry name" value="50S ribosomal protein L19"/>
    <property type="match status" value="1"/>
</dbReference>
<dbReference type="Gene3D" id="2.30.30.790">
    <property type="match status" value="1"/>
</dbReference>
<dbReference type="HAMAP" id="MF_00402">
    <property type="entry name" value="Ribosomal_bL19"/>
    <property type="match status" value="1"/>
</dbReference>
<dbReference type="InterPro" id="IPR001857">
    <property type="entry name" value="Ribosomal_bL19"/>
</dbReference>
<dbReference type="InterPro" id="IPR018257">
    <property type="entry name" value="Ribosomal_bL19_CS"/>
</dbReference>
<dbReference type="InterPro" id="IPR038657">
    <property type="entry name" value="Ribosomal_bL19_sf"/>
</dbReference>
<dbReference type="InterPro" id="IPR008991">
    <property type="entry name" value="Translation_prot_SH3-like_sf"/>
</dbReference>
<dbReference type="NCBIfam" id="TIGR01024">
    <property type="entry name" value="rplS_bact"/>
    <property type="match status" value="1"/>
</dbReference>
<dbReference type="PANTHER" id="PTHR15680:SF9">
    <property type="entry name" value="LARGE RIBOSOMAL SUBUNIT PROTEIN BL19M"/>
    <property type="match status" value="1"/>
</dbReference>
<dbReference type="PANTHER" id="PTHR15680">
    <property type="entry name" value="RIBOSOMAL PROTEIN L19"/>
    <property type="match status" value="1"/>
</dbReference>
<dbReference type="Pfam" id="PF01245">
    <property type="entry name" value="Ribosomal_L19"/>
    <property type="match status" value="1"/>
</dbReference>
<dbReference type="PIRSF" id="PIRSF002191">
    <property type="entry name" value="Ribosomal_L19"/>
    <property type="match status" value="1"/>
</dbReference>
<dbReference type="PRINTS" id="PR00061">
    <property type="entry name" value="RIBOSOMALL19"/>
</dbReference>
<dbReference type="SUPFAM" id="SSF50104">
    <property type="entry name" value="Translation proteins SH3-like domain"/>
    <property type="match status" value="1"/>
</dbReference>
<dbReference type="PROSITE" id="PS01015">
    <property type="entry name" value="RIBOSOMAL_L19"/>
    <property type="match status" value="1"/>
</dbReference>
<accession>A6TCL4</accession>
<comment type="function">
    <text evidence="1">This protein is located at the 30S-50S ribosomal subunit interface and may play a role in the structure and function of the aminoacyl-tRNA binding site.</text>
</comment>
<comment type="similarity">
    <text evidence="1">Belongs to the bacterial ribosomal protein bL19 family.</text>
</comment>
<name>RL19_KLEP7</name>
<reference key="1">
    <citation type="submission" date="2006-09" db="EMBL/GenBank/DDBJ databases">
        <authorList>
            <consortium name="The Klebsiella pneumonia Genome Sequencing Project"/>
            <person name="McClelland M."/>
            <person name="Sanderson E.K."/>
            <person name="Spieth J."/>
            <person name="Clifton W.S."/>
            <person name="Latreille P."/>
            <person name="Sabo A."/>
            <person name="Pepin K."/>
            <person name="Bhonagiri V."/>
            <person name="Porwollik S."/>
            <person name="Ali J."/>
            <person name="Wilson R.K."/>
        </authorList>
    </citation>
    <scope>NUCLEOTIDE SEQUENCE [LARGE SCALE GENOMIC DNA]</scope>
    <source>
        <strain>ATCC 700721 / MGH 78578</strain>
    </source>
</reference>
<keyword id="KW-0687">Ribonucleoprotein</keyword>
<keyword id="KW-0689">Ribosomal protein</keyword>
<gene>
    <name evidence="1" type="primary">rplS</name>
    <name type="ordered locus">KPN78578_28740</name>
    <name type="ORF">KPN_02929</name>
</gene>
<proteinExistence type="inferred from homology"/>
<sequence length="115" mass="13133">MSNIIKQLEQEQMKQDVPSFRPGDTVEVKVWVVEGSKKRLQAFEGVVIAIRNRGLHSAFTVRKISNGEGVERVFQTHSPVVDSIAVKRRGAVRKAKLYYLRERTGKSARIKERLN</sequence>